<name>RS15_RAT</name>
<sequence length="145" mass="17040">MAEVEQKKKRTFRKFTYRGVDLDQLLDMSYEQLMQLYSARQRRRLNRGLRRKQHSLLKRLRKAKKEAPPMEKPEVVKTHLRDMIILPEMVGSMVGVYNGKTFNQVEIKPEMIGHYLGEFSITYKPVKHGRPGIGATHSSRFIPLK</sequence>
<gene>
    <name type="primary">Rps15</name>
    <name type="synonym">Rig</name>
</gene>
<protein>
    <recommendedName>
        <fullName evidence="3">Small ribosomal subunit protein uS19</fullName>
    </recommendedName>
    <alternativeName>
        <fullName>40S ribosomal protein S15</fullName>
    </alternativeName>
    <alternativeName>
        <fullName>RIG protein</fullName>
    </alternativeName>
</protein>
<organism>
    <name type="scientific">Rattus norvegicus</name>
    <name type="common">Rat</name>
    <dbReference type="NCBI Taxonomy" id="10116"/>
    <lineage>
        <taxon>Eukaryota</taxon>
        <taxon>Metazoa</taxon>
        <taxon>Chordata</taxon>
        <taxon>Craniata</taxon>
        <taxon>Vertebrata</taxon>
        <taxon>Euteleostomi</taxon>
        <taxon>Mammalia</taxon>
        <taxon>Eutheria</taxon>
        <taxon>Euarchontoglires</taxon>
        <taxon>Glires</taxon>
        <taxon>Rodentia</taxon>
        <taxon>Myomorpha</taxon>
        <taxon>Muroidea</taxon>
        <taxon>Muridae</taxon>
        <taxon>Murinae</taxon>
        <taxon>Rattus</taxon>
    </lineage>
</organism>
<feature type="initiator methionine" description="Removed" evidence="2">
    <location>
        <position position="1"/>
    </location>
</feature>
<feature type="chain" id="PRO_0000130032" description="Small ribosomal subunit protein uS19">
    <location>
        <begin position="2"/>
        <end position="145"/>
    </location>
</feature>
<feature type="modified residue" description="N-acetylalanine" evidence="2">
    <location>
        <position position="2"/>
    </location>
</feature>
<feature type="cross-link" description="Glycyl lysine isopeptide (Lys-Gly) (interchain with G-Cter in SUMO2)" evidence="1">
    <location>
        <position position="108"/>
    </location>
</feature>
<dbReference type="EMBL" id="M19393">
    <property type="protein sequence ID" value="AAA42044.1"/>
    <property type="molecule type" value="mRNA"/>
</dbReference>
<dbReference type="EMBL" id="D11388">
    <property type="protein sequence ID" value="BAA01984.1"/>
    <property type="molecule type" value="Genomic_DNA"/>
</dbReference>
<dbReference type="PIR" id="S28939">
    <property type="entry name" value="R3RT15"/>
</dbReference>
<dbReference type="RefSeq" id="NP_058847.1">
    <property type="nucleotide sequence ID" value="NM_017151.2"/>
</dbReference>
<dbReference type="SMR" id="P62845"/>
<dbReference type="BioGRID" id="247955">
    <property type="interactions" value="3"/>
</dbReference>
<dbReference type="FunCoup" id="P62845">
    <property type="interactions" value="2730"/>
</dbReference>
<dbReference type="IntAct" id="P62845">
    <property type="interactions" value="10"/>
</dbReference>
<dbReference type="STRING" id="10116.ENSRNOP00000035156"/>
<dbReference type="iPTMnet" id="P62845"/>
<dbReference type="PhosphoSitePlus" id="P62845"/>
<dbReference type="jPOST" id="P62845"/>
<dbReference type="PaxDb" id="10116-ENSRNOP00000035156"/>
<dbReference type="Ensembl" id="ENSRNOT00000029791.5">
    <property type="protein sequence ID" value="ENSRNOP00000035156.3"/>
    <property type="gene ID" value="ENSRNOG00000024603.5"/>
</dbReference>
<dbReference type="Ensembl" id="ENSRNOT00000113730.1">
    <property type="protein sequence ID" value="ENSRNOP00000092210.1"/>
    <property type="gene ID" value="ENSRNOG00000024603.5"/>
</dbReference>
<dbReference type="GeneID" id="29285"/>
<dbReference type="KEGG" id="rno:29285"/>
<dbReference type="UCSC" id="RGD:62026">
    <property type="organism name" value="rat"/>
</dbReference>
<dbReference type="AGR" id="RGD:62026"/>
<dbReference type="CTD" id="6209"/>
<dbReference type="RGD" id="62026">
    <property type="gene designation" value="Rps15"/>
</dbReference>
<dbReference type="eggNOG" id="KOG0898">
    <property type="taxonomic scope" value="Eukaryota"/>
</dbReference>
<dbReference type="GeneTree" id="ENSGT00390000000475"/>
<dbReference type="HOGENOM" id="CLU_097347_1_0_1"/>
<dbReference type="InParanoid" id="P62845"/>
<dbReference type="OMA" id="KTHCRDM"/>
<dbReference type="OrthoDB" id="10258210at2759"/>
<dbReference type="PhylomeDB" id="P62845"/>
<dbReference type="TreeFam" id="TF318650"/>
<dbReference type="Reactome" id="R-RNO-156827">
    <property type="pathway name" value="L13a-mediated translational silencing of Ceruloplasmin expression"/>
</dbReference>
<dbReference type="Reactome" id="R-RNO-1799339">
    <property type="pathway name" value="SRP-dependent cotranslational protein targeting to membrane"/>
</dbReference>
<dbReference type="Reactome" id="R-RNO-6791226">
    <property type="pathway name" value="Major pathway of rRNA processing in the nucleolus and cytosol"/>
</dbReference>
<dbReference type="Reactome" id="R-RNO-72649">
    <property type="pathway name" value="Translation initiation complex formation"/>
</dbReference>
<dbReference type="Reactome" id="R-RNO-72689">
    <property type="pathway name" value="Formation of a pool of free 40S subunits"/>
</dbReference>
<dbReference type="Reactome" id="R-RNO-72695">
    <property type="pathway name" value="Formation of the ternary complex, and subsequently, the 43S complex"/>
</dbReference>
<dbReference type="Reactome" id="R-RNO-72702">
    <property type="pathway name" value="Ribosomal scanning and start codon recognition"/>
</dbReference>
<dbReference type="Reactome" id="R-RNO-72706">
    <property type="pathway name" value="GTP hydrolysis and joining of the 60S ribosomal subunit"/>
</dbReference>
<dbReference type="Reactome" id="R-RNO-975956">
    <property type="pathway name" value="Nonsense Mediated Decay (NMD) independent of the Exon Junction Complex (EJC)"/>
</dbReference>
<dbReference type="Reactome" id="R-RNO-975957">
    <property type="pathway name" value="Nonsense Mediated Decay (NMD) enhanced by the Exon Junction Complex (EJC)"/>
</dbReference>
<dbReference type="PRO" id="PR:P62845"/>
<dbReference type="Proteomes" id="UP000002494">
    <property type="component" value="Chromosome 7"/>
</dbReference>
<dbReference type="Bgee" id="ENSRNOG00000024603">
    <property type="expression patterns" value="Expressed in thymus and 20 other cell types or tissues"/>
</dbReference>
<dbReference type="GO" id="GO:0098556">
    <property type="term" value="C:cytoplasmic side of rough endoplasmic reticulum membrane"/>
    <property type="evidence" value="ECO:0000266"/>
    <property type="project" value="RGD"/>
</dbReference>
<dbReference type="GO" id="GO:0022626">
    <property type="term" value="C:cytosolic ribosome"/>
    <property type="evidence" value="ECO:0000266"/>
    <property type="project" value="RGD"/>
</dbReference>
<dbReference type="GO" id="GO:0022627">
    <property type="term" value="C:cytosolic small ribosomal subunit"/>
    <property type="evidence" value="ECO:0000314"/>
    <property type="project" value="RGD"/>
</dbReference>
<dbReference type="GO" id="GO:0005654">
    <property type="term" value="C:nucleoplasm"/>
    <property type="evidence" value="ECO:0000314"/>
    <property type="project" value="RGD"/>
</dbReference>
<dbReference type="GO" id="GO:0098794">
    <property type="term" value="C:postsynapse"/>
    <property type="evidence" value="ECO:0000303"/>
    <property type="project" value="SynGO"/>
</dbReference>
<dbReference type="GO" id="GO:0005840">
    <property type="term" value="C:ribosome"/>
    <property type="evidence" value="ECO:0000303"/>
    <property type="project" value="SynGO"/>
</dbReference>
<dbReference type="GO" id="GO:0045202">
    <property type="term" value="C:synapse"/>
    <property type="evidence" value="ECO:0000314"/>
    <property type="project" value="SynGO"/>
</dbReference>
<dbReference type="GO" id="GO:0097371">
    <property type="term" value="F:MDM2/MDM4 family protein binding"/>
    <property type="evidence" value="ECO:0000266"/>
    <property type="project" value="RGD"/>
</dbReference>
<dbReference type="GO" id="GO:0003723">
    <property type="term" value="F:RNA binding"/>
    <property type="evidence" value="ECO:0000304"/>
    <property type="project" value="ProtInc"/>
</dbReference>
<dbReference type="GO" id="GO:0003735">
    <property type="term" value="F:structural constituent of ribosome"/>
    <property type="evidence" value="ECO:0000315"/>
    <property type="project" value="RGD"/>
</dbReference>
<dbReference type="GO" id="GO:1990948">
    <property type="term" value="F:ubiquitin ligase inhibitor activity"/>
    <property type="evidence" value="ECO:0000266"/>
    <property type="project" value="RGD"/>
</dbReference>
<dbReference type="GO" id="GO:0097421">
    <property type="term" value="P:liver regeneration"/>
    <property type="evidence" value="ECO:0000270"/>
    <property type="project" value="RGD"/>
</dbReference>
<dbReference type="GO" id="GO:1901798">
    <property type="term" value="P:positive regulation of signal transduction by p53 class mediator"/>
    <property type="evidence" value="ECO:0000266"/>
    <property type="project" value="RGD"/>
</dbReference>
<dbReference type="GO" id="GO:0000028">
    <property type="term" value="P:ribosomal small subunit assembly"/>
    <property type="evidence" value="ECO:0000315"/>
    <property type="project" value="RGD"/>
</dbReference>
<dbReference type="GO" id="GO:0042274">
    <property type="term" value="P:ribosomal small subunit biogenesis"/>
    <property type="evidence" value="ECO:0000266"/>
    <property type="project" value="RGD"/>
</dbReference>
<dbReference type="GO" id="GO:0000056">
    <property type="term" value="P:ribosomal small subunit export from nucleus"/>
    <property type="evidence" value="ECO:0000266"/>
    <property type="project" value="RGD"/>
</dbReference>
<dbReference type="GO" id="GO:0006364">
    <property type="term" value="P:rRNA processing"/>
    <property type="evidence" value="ECO:0000266"/>
    <property type="project" value="RGD"/>
</dbReference>
<dbReference type="GO" id="GO:0006412">
    <property type="term" value="P:translation"/>
    <property type="evidence" value="ECO:0000304"/>
    <property type="project" value="ProtInc"/>
</dbReference>
<dbReference type="FunFam" id="3.30.860.10:FF:000002">
    <property type="entry name" value="40S ribosomal protein S15"/>
    <property type="match status" value="1"/>
</dbReference>
<dbReference type="Gene3D" id="3.30.860.10">
    <property type="entry name" value="30s Ribosomal Protein S19, Chain A"/>
    <property type="match status" value="1"/>
</dbReference>
<dbReference type="HAMAP" id="MF_00531">
    <property type="entry name" value="Ribosomal_uS19"/>
    <property type="match status" value="1"/>
</dbReference>
<dbReference type="InterPro" id="IPR002222">
    <property type="entry name" value="Ribosomal_uS19"/>
</dbReference>
<dbReference type="InterPro" id="IPR020934">
    <property type="entry name" value="Ribosomal_uS19_CS"/>
</dbReference>
<dbReference type="InterPro" id="IPR005713">
    <property type="entry name" value="Ribosomal_uS19_euk/arc"/>
</dbReference>
<dbReference type="InterPro" id="IPR023575">
    <property type="entry name" value="Ribosomal_uS19_SF"/>
</dbReference>
<dbReference type="NCBIfam" id="NF003121">
    <property type="entry name" value="PRK04038.1"/>
    <property type="match status" value="1"/>
</dbReference>
<dbReference type="NCBIfam" id="TIGR01025">
    <property type="entry name" value="uS19_arch"/>
    <property type="match status" value="1"/>
</dbReference>
<dbReference type="PANTHER" id="PTHR11880">
    <property type="entry name" value="RIBOSOMAL PROTEIN S19P FAMILY MEMBER"/>
    <property type="match status" value="1"/>
</dbReference>
<dbReference type="PANTHER" id="PTHR11880:SF2">
    <property type="entry name" value="SMALL RIBOSOMAL SUBUNIT PROTEIN US19"/>
    <property type="match status" value="1"/>
</dbReference>
<dbReference type="Pfam" id="PF00203">
    <property type="entry name" value="Ribosomal_S19"/>
    <property type="match status" value="1"/>
</dbReference>
<dbReference type="PIRSF" id="PIRSF002144">
    <property type="entry name" value="Ribosomal_S19"/>
    <property type="match status" value="1"/>
</dbReference>
<dbReference type="PRINTS" id="PR00975">
    <property type="entry name" value="RIBOSOMALS19"/>
</dbReference>
<dbReference type="SUPFAM" id="SSF54570">
    <property type="entry name" value="Ribosomal protein S19"/>
    <property type="match status" value="1"/>
</dbReference>
<dbReference type="PROSITE" id="PS00323">
    <property type="entry name" value="RIBOSOMAL_S19"/>
    <property type="match status" value="1"/>
</dbReference>
<accession>P62845</accession>
<accession>P11174</accession>
<keyword id="KW-0007">Acetylation</keyword>
<keyword id="KW-0963">Cytoplasm</keyword>
<keyword id="KW-0903">Direct protein sequencing</keyword>
<keyword id="KW-1017">Isopeptide bond</keyword>
<keyword id="KW-1185">Reference proteome</keyword>
<keyword id="KW-0687">Ribonucleoprotein</keyword>
<keyword id="KW-0689">Ribosomal protein</keyword>
<keyword id="KW-0832">Ubl conjugation</keyword>
<evidence type="ECO:0000250" key="1">
    <source>
        <dbReference type="UniProtKB" id="P62841"/>
    </source>
</evidence>
<evidence type="ECO:0000269" key="2">
    <source>
    </source>
</evidence>
<evidence type="ECO:0000305" key="3"/>
<comment type="function">
    <text evidence="1">Component of the small ribosomal subunit. The ribosome is a large ribonucleoprotein complex responsible for the synthesis of proteins in the cell.</text>
</comment>
<comment type="subunit">
    <text evidence="1">Component of the small ribosomal subunit.</text>
</comment>
<comment type="subcellular location">
    <subcellularLocation>
        <location evidence="1">Cytoplasm</location>
    </subcellularLocation>
</comment>
<comment type="similarity">
    <text evidence="3">Belongs to the universal ribosomal protein uS19 family.</text>
</comment>
<proteinExistence type="evidence at protein level"/>
<reference key="1">
    <citation type="journal article" date="1986" name="Diabetes">
        <title>Novel gene activated in rat insulinomas.</title>
        <authorList>
            <person name="Takasawa S."/>
            <person name="Yamamoto H."/>
            <person name="Terazono K."/>
            <person name="Okamoto H."/>
        </authorList>
    </citation>
    <scope>NUCLEOTIDE SEQUENCE [MRNA]</scope>
</reference>
<reference key="2">
    <citation type="journal article" date="1992" name="Biochim. Biophys. Acta">
        <title>The primary structure of rat rig/ribosomal protein S15 gene.</title>
        <authorList>
            <person name="Takasawa S."/>
            <person name="Tohgo A."/>
            <person name="Unno M."/>
            <person name="Shiga K."/>
            <person name="Yonekura H."/>
            <person name="Okamoto H."/>
        </authorList>
    </citation>
    <scope>NUCLEOTIDE SEQUENCE [GENOMIC DNA]</scope>
</reference>
<reference key="3">
    <citation type="journal article" date="1991" name="FEBS Lett.">
        <title>Rig encodes ribosomal protein S15. The primary structure of mammalian ribosomal protein S15.</title>
        <authorList>
            <person name="Kitagawa M."/>
            <person name="Takasawa S."/>
            <person name="Kikuchi N."/>
            <person name="Itoh T."/>
            <person name="Teraoka H."/>
            <person name="Yamamoto H."/>
            <person name="Okamoto H."/>
        </authorList>
    </citation>
    <scope>PROTEIN SEQUENCE OF 2-145</scope>
    <scope>CLEAVAGE OF INITIATOR METHIONINE</scope>
    <scope>ACETYLATION AT ALA-2</scope>
    <source>
        <strain>Wistar</strain>
        <tissue>Liver</tissue>
    </source>
</reference>